<proteinExistence type="inferred from homology"/>
<sequence>MNKQYSYPLDLSWSTEELASVLSFFNDVEAAYEGKVEAKKLLDSYKGFKAVVPSKSEEKRLGREFETVSGYSLYRAVQAAKEKGEGKISLGK</sequence>
<comment type="similarity">
    <text evidence="1">Belongs to the UPF0223 family.</text>
</comment>
<protein>
    <recommendedName>
        <fullName evidence="1">UPF0223 protein SPD_1235</fullName>
    </recommendedName>
</protein>
<feature type="chain" id="PRO_1000064149" description="UPF0223 protein SPD_1235">
    <location>
        <begin position="1"/>
        <end position="92"/>
    </location>
</feature>
<reference key="1">
    <citation type="journal article" date="2007" name="J. Bacteriol.">
        <title>Genome sequence of Avery's virulent serotype 2 strain D39 of Streptococcus pneumoniae and comparison with that of unencapsulated laboratory strain R6.</title>
        <authorList>
            <person name="Lanie J.A."/>
            <person name="Ng W.-L."/>
            <person name="Kazmierczak K.M."/>
            <person name="Andrzejewski T.M."/>
            <person name="Davidsen T.M."/>
            <person name="Wayne K.J."/>
            <person name="Tettelin H."/>
            <person name="Glass J.I."/>
            <person name="Winkler M.E."/>
        </authorList>
    </citation>
    <scope>NUCLEOTIDE SEQUENCE [LARGE SCALE GENOMIC DNA]</scope>
    <source>
        <strain>D39 / NCTC 7466</strain>
    </source>
</reference>
<keyword id="KW-1185">Reference proteome</keyword>
<evidence type="ECO:0000255" key="1">
    <source>
        <dbReference type="HAMAP-Rule" id="MF_01041"/>
    </source>
</evidence>
<organism>
    <name type="scientific">Streptococcus pneumoniae serotype 2 (strain D39 / NCTC 7466)</name>
    <dbReference type="NCBI Taxonomy" id="373153"/>
    <lineage>
        <taxon>Bacteria</taxon>
        <taxon>Bacillati</taxon>
        <taxon>Bacillota</taxon>
        <taxon>Bacilli</taxon>
        <taxon>Lactobacillales</taxon>
        <taxon>Streptococcaceae</taxon>
        <taxon>Streptococcus</taxon>
    </lineage>
</organism>
<dbReference type="EMBL" id="CP000410">
    <property type="protein sequence ID" value="ABJ54772.1"/>
    <property type="molecule type" value="Genomic_DNA"/>
</dbReference>
<dbReference type="RefSeq" id="WP_001041974.1">
    <property type="nucleotide sequence ID" value="NZ_JAMLJR010000005.1"/>
</dbReference>
<dbReference type="SMR" id="Q04JU6"/>
<dbReference type="PaxDb" id="373153-SPD_1235"/>
<dbReference type="KEGG" id="spd:SPD_1235"/>
<dbReference type="eggNOG" id="COG4476">
    <property type="taxonomic scope" value="Bacteria"/>
</dbReference>
<dbReference type="HOGENOM" id="CLU_166693_0_0_9"/>
<dbReference type="BioCyc" id="SPNE373153:G1G6V-1335-MONOMER"/>
<dbReference type="Proteomes" id="UP000001452">
    <property type="component" value="Chromosome"/>
</dbReference>
<dbReference type="Gene3D" id="1.10.220.80">
    <property type="entry name" value="BH2638-like"/>
    <property type="match status" value="1"/>
</dbReference>
<dbReference type="HAMAP" id="MF_01041">
    <property type="entry name" value="UPF0223"/>
    <property type="match status" value="1"/>
</dbReference>
<dbReference type="InterPro" id="IPR023324">
    <property type="entry name" value="BH2638-like_sf"/>
</dbReference>
<dbReference type="InterPro" id="IPR007920">
    <property type="entry name" value="UPF0223"/>
</dbReference>
<dbReference type="NCBIfam" id="NF003353">
    <property type="entry name" value="PRK04387.1"/>
    <property type="match status" value="1"/>
</dbReference>
<dbReference type="Pfam" id="PF05256">
    <property type="entry name" value="UPF0223"/>
    <property type="match status" value="1"/>
</dbReference>
<dbReference type="PIRSF" id="PIRSF037260">
    <property type="entry name" value="UPF0223"/>
    <property type="match status" value="1"/>
</dbReference>
<dbReference type="SUPFAM" id="SSF158504">
    <property type="entry name" value="BH2638-like"/>
    <property type="match status" value="1"/>
</dbReference>
<accession>Q04JU6</accession>
<name>Y1235_STRP2</name>
<gene>
    <name type="ordered locus">SPD_1235</name>
</gene>